<comment type="function">
    <text evidence="1">IGPS catalyzes the conversion of PRFAR and glutamine to IGP, AICAR and glutamate. The HisF subunit catalyzes the cyclization activity that produces IGP and AICAR from PRFAR using the ammonia provided by the HisH subunit.</text>
</comment>
<comment type="catalytic activity">
    <reaction evidence="1">
        <text>5-[(5-phospho-1-deoxy-D-ribulos-1-ylimino)methylamino]-1-(5-phospho-beta-D-ribosyl)imidazole-4-carboxamide + L-glutamine = D-erythro-1-(imidazol-4-yl)glycerol 3-phosphate + 5-amino-1-(5-phospho-beta-D-ribosyl)imidazole-4-carboxamide + L-glutamate + H(+)</text>
        <dbReference type="Rhea" id="RHEA:24793"/>
        <dbReference type="ChEBI" id="CHEBI:15378"/>
        <dbReference type="ChEBI" id="CHEBI:29985"/>
        <dbReference type="ChEBI" id="CHEBI:58278"/>
        <dbReference type="ChEBI" id="CHEBI:58359"/>
        <dbReference type="ChEBI" id="CHEBI:58475"/>
        <dbReference type="ChEBI" id="CHEBI:58525"/>
        <dbReference type="EC" id="4.3.2.10"/>
    </reaction>
</comment>
<comment type="pathway">
    <text evidence="1">Amino-acid biosynthesis; L-histidine biosynthesis; L-histidine from 5-phospho-alpha-D-ribose 1-diphosphate: step 5/9.</text>
</comment>
<comment type="subunit">
    <text evidence="1">Heterodimer of HisH and HisF.</text>
</comment>
<comment type="subcellular location">
    <subcellularLocation>
        <location evidence="1">Cytoplasm</location>
    </subcellularLocation>
</comment>
<comment type="similarity">
    <text evidence="1">Belongs to the HisA/HisF family.</text>
</comment>
<organism>
    <name type="scientific">Thermosynechococcus vestitus (strain NIES-2133 / IAM M-273 / BP-1)</name>
    <dbReference type="NCBI Taxonomy" id="197221"/>
    <lineage>
        <taxon>Bacteria</taxon>
        <taxon>Bacillati</taxon>
        <taxon>Cyanobacteriota</taxon>
        <taxon>Cyanophyceae</taxon>
        <taxon>Acaryochloridales</taxon>
        <taxon>Thermosynechococcaceae</taxon>
        <taxon>Thermosynechococcus</taxon>
    </lineage>
</organism>
<sequence>MMLAKRILPCLDVKAGRVVKGVNFVNLRDAGDPVELAQAYNAAGADELVFLDITATHEERNILIDVVYRTADQVFIPLTVGGGIQSLTMIKDLLRAGADKVSLNSAAVRQPDLVNQASDRFGAQCIVVAIDARREPDCAPDQPRWQVYVRGGREATGLDAVAWAVEMAKRGAGELLVTSMDADGTQAGYDLELTRAIAERVEIPVIASGGAGTCEHIRAALVEGKAEAALLASLLHYGQLTIAQIKGYLHQHQVPVRQAEPLPQPAREGLGDSARRAMSSG</sequence>
<gene>
    <name evidence="1" type="primary">hisF</name>
    <name type="ordered locus">tlr1185</name>
</gene>
<name>HIS6_THEVB</name>
<feature type="chain" id="PRO_0000142245" description="Imidazole glycerol phosphate synthase subunit HisF">
    <location>
        <begin position="1"/>
        <end position="281"/>
    </location>
</feature>
<feature type="region of interest" description="Disordered" evidence="2">
    <location>
        <begin position="256"/>
        <end position="281"/>
    </location>
</feature>
<feature type="active site" evidence="1">
    <location>
        <position position="12"/>
    </location>
</feature>
<feature type="active site" evidence="1">
    <location>
        <position position="131"/>
    </location>
</feature>
<protein>
    <recommendedName>
        <fullName evidence="1">Imidazole glycerol phosphate synthase subunit HisF</fullName>
        <ecNumber evidence="1">4.3.2.10</ecNumber>
    </recommendedName>
    <alternativeName>
        <fullName evidence="1">IGP synthase cyclase subunit</fullName>
    </alternativeName>
    <alternativeName>
        <fullName evidence="1">IGP synthase subunit HisF</fullName>
    </alternativeName>
    <alternativeName>
        <fullName evidence="1">ImGP synthase subunit HisF</fullName>
        <shortName evidence="1">IGPS subunit HisF</shortName>
    </alternativeName>
</protein>
<proteinExistence type="inferred from homology"/>
<keyword id="KW-0028">Amino-acid biosynthesis</keyword>
<keyword id="KW-0963">Cytoplasm</keyword>
<keyword id="KW-0368">Histidine biosynthesis</keyword>
<keyword id="KW-0456">Lyase</keyword>
<keyword id="KW-1185">Reference proteome</keyword>
<reference key="1">
    <citation type="journal article" date="2002" name="DNA Res.">
        <title>Complete genome structure of the thermophilic cyanobacterium Thermosynechococcus elongatus BP-1.</title>
        <authorList>
            <person name="Nakamura Y."/>
            <person name="Kaneko T."/>
            <person name="Sato S."/>
            <person name="Ikeuchi M."/>
            <person name="Katoh H."/>
            <person name="Sasamoto S."/>
            <person name="Watanabe A."/>
            <person name="Iriguchi M."/>
            <person name="Kawashima K."/>
            <person name="Kimura T."/>
            <person name="Kishida Y."/>
            <person name="Kiyokawa C."/>
            <person name="Kohara M."/>
            <person name="Matsumoto M."/>
            <person name="Matsuno A."/>
            <person name="Nakazaki N."/>
            <person name="Shimpo S."/>
            <person name="Sugimoto M."/>
            <person name="Takeuchi C."/>
            <person name="Yamada M."/>
            <person name="Tabata S."/>
        </authorList>
    </citation>
    <scope>NUCLEOTIDE SEQUENCE [LARGE SCALE GENOMIC DNA]</scope>
    <source>
        <strain>NIES-2133 / IAM M-273 / BP-1</strain>
    </source>
</reference>
<dbReference type="EC" id="4.3.2.10" evidence="1"/>
<dbReference type="EMBL" id="BA000039">
    <property type="protein sequence ID" value="BAC08737.1"/>
    <property type="molecule type" value="Genomic_DNA"/>
</dbReference>
<dbReference type="RefSeq" id="NP_681975.1">
    <property type="nucleotide sequence ID" value="NC_004113.1"/>
</dbReference>
<dbReference type="SMR" id="Q8DJN7"/>
<dbReference type="STRING" id="197221.gene:10747780"/>
<dbReference type="EnsemblBacteria" id="BAC08737">
    <property type="protein sequence ID" value="BAC08737"/>
    <property type="gene ID" value="BAC08737"/>
</dbReference>
<dbReference type="KEGG" id="tel:tlr1185"/>
<dbReference type="PATRIC" id="fig|197221.4.peg.1246"/>
<dbReference type="eggNOG" id="COG0107">
    <property type="taxonomic scope" value="Bacteria"/>
</dbReference>
<dbReference type="UniPathway" id="UPA00031">
    <property type="reaction ID" value="UER00010"/>
</dbReference>
<dbReference type="Proteomes" id="UP000000440">
    <property type="component" value="Chromosome"/>
</dbReference>
<dbReference type="GO" id="GO:0005737">
    <property type="term" value="C:cytoplasm"/>
    <property type="evidence" value="ECO:0007669"/>
    <property type="project" value="UniProtKB-SubCell"/>
</dbReference>
<dbReference type="GO" id="GO:0000107">
    <property type="term" value="F:imidazoleglycerol-phosphate synthase activity"/>
    <property type="evidence" value="ECO:0007669"/>
    <property type="project" value="UniProtKB-UniRule"/>
</dbReference>
<dbReference type="GO" id="GO:0016829">
    <property type="term" value="F:lyase activity"/>
    <property type="evidence" value="ECO:0007669"/>
    <property type="project" value="UniProtKB-KW"/>
</dbReference>
<dbReference type="GO" id="GO:0000105">
    <property type="term" value="P:L-histidine biosynthetic process"/>
    <property type="evidence" value="ECO:0007669"/>
    <property type="project" value="UniProtKB-UniRule"/>
</dbReference>
<dbReference type="CDD" id="cd04731">
    <property type="entry name" value="HisF"/>
    <property type="match status" value="1"/>
</dbReference>
<dbReference type="FunFam" id="3.20.20.70:FF:000006">
    <property type="entry name" value="Imidazole glycerol phosphate synthase subunit HisF"/>
    <property type="match status" value="1"/>
</dbReference>
<dbReference type="Gene3D" id="3.20.20.70">
    <property type="entry name" value="Aldolase class I"/>
    <property type="match status" value="1"/>
</dbReference>
<dbReference type="HAMAP" id="MF_01013">
    <property type="entry name" value="HisF"/>
    <property type="match status" value="1"/>
</dbReference>
<dbReference type="InterPro" id="IPR013785">
    <property type="entry name" value="Aldolase_TIM"/>
</dbReference>
<dbReference type="InterPro" id="IPR006062">
    <property type="entry name" value="His_biosynth"/>
</dbReference>
<dbReference type="InterPro" id="IPR004651">
    <property type="entry name" value="HisF"/>
</dbReference>
<dbReference type="InterPro" id="IPR050064">
    <property type="entry name" value="IGPS_HisA/HisF"/>
</dbReference>
<dbReference type="InterPro" id="IPR011060">
    <property type="entry name" value="RibuloseP-bd_barrel"/>
</dbReference>
<dbReference type="NCBIfam" id="TIGR00735">
    <property type="entry name" value="hisF"/>
    <property type="match status" value="1"/>
</dbReference>
<dbReference type="PANTHER" id="PTHR21235:SF2">
    <property type="entry name" value="IMIDAZOLE GLYCEROL PHOSPHATE SYNTHASE HISHF"/>
    <property type="match status" value="1"/>
</dbReference>
<dbReference type="PANTHER" id="PTHR21235">
    <property type="entry name" value="IMIDAZOLE GLYCEROL PHOSPHATE SYNTHASE SUBUNIT HISF/H IGP SYNTHASE SUBUNIT HISF/H"/>
    <property type="match status" value="1"/>
</dbReference>
<dbReference type="Pfam" id="PF00977">
    <property type="entry name" value="His_biosynth"/>
    <property type="match status" value="1"/>
</dbReference>
<dbReference type="SUPFAM" id="SSF51366">
    <property type="entry name" value="Ribulose-phoshate binding barrel"/>
    <property type="match status" value="1"/>
</dbReference>
<accession>Q8DJN7</accession>
<evidence type="ECO:0000255" key="1">
    <source>
        <dbReference type="HAMAP-Rule" id="MF_01013"/>
    </source>
</evidence>
<evidence type="ECO:0000256" key="2">
    <source>
        <dbReference type="SAM" id="MobiDB-lite"/>
    </source>
</evidence>